<comment type="function">
    <text evidence="1">GTPase that plays an essential role in the late steps of ribosome biogenesis.</text>
</comment>
<comment type="subunit">
    <text evidence="1">Associates with the 50S ribosomal subunit.</text>
</comment>
<comment type="similarity">
    <text evidence="1">Belongs to the TRAFAC class TrmE-Era-EngA-EngB-Septin-like GTPase superfamily. EngA (Der) GTPase family.</text>
</comment>
<proteinExistence type="inferred from homology"/>
<dbReference type="EMBL" id="CP000724">
    <property type="protein sequence ID" value="ABR49007.1"/>
    <property type="molecule type" value="Genomic_DNA"/>
</dbReference>
<dbReference type="RefSeq" id="WP_012063975.1">
    <property type="nucleotide sequence ID" value="NC_009633.1"/>
</dbReference>
<dbReference type="SMR" id="A6TS39"/>
<dbReference type="STRING" id="293826.Amet_2857"/>
<dbReference type="KEGG" id="amt:Amet_2857"/>
<dbReference type="eggNOG" id="COG1160">
    <property type="taxonomic scope" value="Bacteria"/>
</dbReference>
<dbReference type="HOGENOM" id="CLU_016077_6_2_9"/>
<dbReference type="OrthoDB" id="9805918at2"/>
<dbReference type="Proteomes" id="UP000001572">
    <property type="component" value="Chromosome"/>
</dbReference>
<dbReference type="GO" id="GO:0005525">
    <property type="term" value="F:GTP binding"/>
    <property type="evidence" value="ECO:0007669"/>
    <property type="project" value="UniProtKB-UniRule"/>
</dbReference>
<dbReference type="GO" id="GO:0043022">
    <property type="term" value="F:ribosome binding"/>
    <property type="evidence" value="ECO:0007669"/>
    <property type="project" value="TreeGrafter"/>
</dbReference>
<dbReference type="GO" id="GO:0042254">
    <property type="term" value="P:ribosome biogenesis"/>
    <property type="evidence" value="ECO:0007669"/>
    <property type="project" value="UniProtKB-KW"/>
</dbReference>
<dbReference type="CDD" id="cd01894">
    <property type="entry name" value="EngA1"/>
    <property type="match status" value="1"/>
</dbReference>
<dbReference type="CDD" id="cd01895">
    <property type="entry name" value="EngA2"/>
    <property type="match status" value="1"/>
</dbReference>
<dbReference type="FunFam" id="3.30.300.20:FF:000004">
    <property type="entry name" value="GTPase Der"/>
    <property type="match status" value="1"/>
</dbReference>
<dbReference type="FunFam" id="3.40.50.300:FF:000040">
    <property type="entry name" value="GTPase Der"/>
    <property type="match status" value="1"/>
</dbReference>
<dbReference type="FunFam" id="3.40.50.300:FF:000057">
    <property type="entry name" value="GTPase Der"/>
    <property type="match status" value="1"/>
</dbReference>
<dbReference type="Gene3D" id="3.30.300.20">
    <property type="match status" value="1"/>
</dbReference>
<dbReference type="Gene3D" id="3.40.50.300">
    <property type="entry name" value="P-loop containing nucleotide triphosphate hydrolases"/>
    <property type="match status" value="2"/>
</dbReference>
<dbReference type="HAMAP" id="MF_00195">
    <property type="entry name" value="GTPase_Der"/>
    <property type="match status" value="1"/>
</dbReference>
<dbReference type="InterPro" id="IPR031166">
    <property type="entry name" value="G_ENGA"/>
</dbReference>
<dbReference type="InterPro" id="IPR006073">
    <property type="entry name" value="GTP-bd"/>
</dbReference>
<dbReference type="InterPro" id="IPR016484">
    <property type="entry name" value="GTPase_Der"/>
</dbReference>
<dbReference type="InterPro" id="IPR032859">
    <property type="entry name" value="KH_dom-like"/>
</dbReference>
<dbReference type="InterPro" id="IPR015946">
    <property type="entry name" value="KH_dom-like_a/b"/>
</dbReference>
<dbReference type="InterPro" id="IPR027417">
    <property type="entry name" value="P-loop_NTPase"/>
</dbReference>
<dbReference type="InterPro" id="IPR005225">
    <property type="entry name" value="Small_GTP-bd"/>
</dbReference>
<dbReference type="NCBIfam" id="TIGR03594">
    <property type="entry name" value="GTPase_EngA"/>
    <property type="match status" value="1"/>
</dbReference>
<dbReference type="NCBIfam" id="TIGR00231">
    <property type="entry name" value="small_GTP"/>
    <property type="match status" value="2"/>
</dbReference>
<dbReference type="PANTHER" id="PTHR43834">
    <property type="entry name" value="GTPASE DER"/>
    <property type="match status" value="1"/>
</dbReference>
<dbReference type="PANTHER" id="PTHR43834:SF6">
    <property type="entry name" value="GTPASE DER"/>
    <property type="match status" value="1"/>
</dbReference>
<dbReference type="Pfam" id="PF14714">
    <property type="entry name" value="KH_dom-like"/>
    <property type="match status" value="1"/>
</dbReference>
<dbReference type="Pfam" id="PF01926">
    <property type="entry name" value="MMR_HSR1"/>
    <property type="match status" value="2"/>
</dbReference>
<dbReference type="PIRSF" id="PIRSF006485">
    <property type="entry name" value="GTP-binding_EngA"/>
    <property type="match status" value="1"/>
</dbReference>
<dbReference type="PRINTS" id="PR00326">
    <property type="entry name" value="GTP1OBG"/>
</dbReference>
<dbReference type="SUPFAM" id="SSF52540">
    <property type="entry name" value="P-loop containing nucleoside triphosphate hydrolases"/>
    <property type="match status" value="2"/>
</dbReference>
<dbReference type="PROSITE" id="PS51712">
    <property type="entry name" value="G_ENGA"/>
    <property type="match status" value="2"/>
</dbReference>
<organism>
    <name type="scientific">Alkaliphilus metalliredigens (strain QYMF)</name>
    <dbReference type="NCBI Taxonomy" id="293826"/>
    <lineage>
        <taxon>Bacteria</taxon>
        <taxon>Bacillati</taxon>
        <taxon>Bacillota</taxon>
        <taxon>Clostridia</taxon>
        <taxon>Peptostreptococcales</taxon>
        <taxon>Natronincolaceae</taxon>
        <taxon>Alkaliphilus</taxon>
    </lineage>
</organism>
<protein>
    <recommendedName>
        <fullName evidence="1">GTPase Der</fullName>
    </recommendedName>
    <alternativeName>
        <fullName evidence="1">GTP-binding protein EngA</fullName>
    </alternativeName>
</protein>
<accession>A6TS39</accession>
<keyword id="KW-0342">GTP-binding</keyword>
<keyword id="KW-0547">Nucleotide-binding</keyword>
<keyword id="KW-1185">Reference proteome</keyword>
<keyword id="KW-0677">Repeat</keyword>
<keyword id="KW-0690">Ribosome biogenesis</keyword>
<sequence length="440" mass="49275">MAKPIVAIVGRPNVGKSTLFNKIIGHRISIVEDQPGVTRDRIYAEVEWLDHYFTLIDTGGIDADTEEIIPAQMREQAQLAIETADVTVFMVDGRAGLTTSDREVAEMLRKSHKPVLLAMNKVDTSNRLDSFYEFYELGIGDPIEISSAQGLGIGDLLDEIVKHFPENKGVIYDDDVIKVAIIGKPNVGKSSIVNSILGENRVIVSDIAGTTRDAIDTPFNDGEDQYVLIDTAGLRRKSKIKENIEKYSVIRSIAAVERADVCLLVIDATEGVTEQDTKVAGFSHENGKGTIIVVNKWDLIEKDNNTMNKFIKEIRTELAYLSYAPILFISALTRQRMPKVLETVKFISNQRAMRVPTGGLNEVIGEATLLNQPPSDKGKRLKIFYGTQGSIKPPTFVLFINDKKLMHFSYERYIENRIRENFGFEGTPIRFIYREKSGRD</sequence>
<evidence type="ECO:0000255" key="1">
    <source>
        <dbReference type="HAMAP-Rule" id="MF_00195"/>
    </source>
</evidence>
<name>DER_ALKMQ</name>
<feature type="chain" id="PRO_1000058519" description="GTPase Der">
    <location>
        <begin position="1"/>
        <end position="440"/>
    </location>
</feature>
<feature type="domain" description="EngA-type G 1">
    <location>
        <begin position="4"/>
        <end position="168"/>
    </location>
</feature>
<feature type="domain" description="EngA-type G 2">
    <location>
        <begin position="177"/>
        <end position="352"/>
    </location>
</feature>
<feature type="domain" description="KH-like" evidence="1">
    <location>
        <begin position="353"/>
        <end position="437"/>
    </location>
</feature>
<feature type="binding site" evidence="1">
    <location>
        <begin position="10"/>
        <end position="17"/>
    </location>
    <ligand>
        <name>GTP</name>
        <dbReference type="ChEBI" id="CHEBI:37565"/>
        <label>1</label>
    </ligand>
</feature>
<feature type="binding site" evidence="1">
    <location>
        <begin position="57"/>
        <end position="61"/>
    </location>
    <ligand>
        <name>GTP</name>
        <dbReference type="ChEBI" id="CHEBI:37565"/>
        <label>1</label>
    </ligand>
</feature>
<feature type="binding site" evidence="1">
    <location>
        <begin position="120"/>
        <end position="123"/>
    </location>
    <ligand>
        <name>GTP</name>
        <dbReference type="ChEBI" id="CHEBI:37565"/>
        <label>1</label>
    </ligand>
</feature>
<feature type="binding site" evidence="1">
    <location>
        <begin position="183"/>
        <end position="190"/>
    </location>
    <ligand>
        <name>GTP</name>
        <dbReference type="ChEBI" id="CHEBI:37565"/>
        <label>2</label>
    </ligand>
</feature>
<feature type="binding site" evidence="1">
    <location>
        <begin position="230"/>
        <end position="234"/>
    </location>
    <ligand>
        <name>GTP</name>
        <dbReference type="ChEBI" id="CHEBI:37565"/>
        <label>2</label>
    </ligand>
</feature>
<feature type="binding site" evidence="1">
    <location>
        <begin position="295"/>
        <end position="298"/>
    </location>
    <ligand>
        <name>GTP</name>
        <dbReference type="ChEBI" id="CHEBI:37565"/>
        <label>2</label>
    </ligand>
</feature>
<gene>
    <name evidence="1" type="primary">der</name>
    <name type="synonym">engA</name>
    <name type="ordered locus">Amet_2857</name>
</gene>
<reference key="1">
    <citation type="journal article" date="2016" name="Genome Announc.">
        <title>Complete genome sequence of Alkaliphilus metalliredigens strain QYMF, an alkaliphilic and metal-reducing bacterium isolated from borax-contaminated leachate ponds.</title>
        <authorList>
            <person name="Hwang C."/>
            <person name="Copeland A."/>
            <person name="Lucas S."/>
            <person name="Lapidus A."/>
            <person name="Barry K."/>
            <person name="Detter J.C."/>
            <person name="Glavina Del Rio T."/>
            <person name="Hammon N."/>
            <person name="Israni S."/>
            <person name="Dalin E."/>
            <person name="Tice H."/>
            <person name="Pitluck S."/>
            <person name="Chertkov O."/>
            <person name="Brettin T."/>
            <person name="Bruce D."/>
            <person name="Han C."/>
            <person name="Schmutz J."/>
            <person name="Larimer F."/>
            <person name="Land M.L."/>
            <person name="Hauser L."/>
            <person name="Kyrpides N."/>
            <person name="Mikhailova N."/>
            <person name="Ye Q."/>
            <person name="Zhou J."/>
            <person name="Richardson P."/>
            <person name="Fields M.W."/>
        </authorList>
    </citation>
    <scope>NUCLEOTIDE SEQUENCE [LARGE SCALE GENOMIC DNA]</scope>
    <source>
        <strain>QYMF</strain>
    </source>
</reference>